<sequence>MSNLTARVIPCLDIKDGRVVKGVNFVNLVDAGDPVESAAIYEENLADELCFLDITASSDRREILLHLVERIAEKIFIPFTVGGGIRTVDDVKAVLEKGADKVSINTAAFQNPKLLTYSSEIYGSQCIVCAIDVKHEKERDRYEVFLHGGRTATGREALDWAQEAAEKGAGEILLTSMDRDGTRNGFDIHLLKNFSSSLGIPIIASGGAGNPEHMVEAILRGKADAVLAASIFHFGEYSIRETKKAMEEMGISVRLD</sequence>
<feature type="chain" id="PRO_0000142176" description="Imidazole glycerol phosphate synthase subunit HisF">
    <location>
        <begin position="1"/>
        <end position="256"/>
    </location>
</feature>
<feature type="active site" evidence="1">
    <location>
        <position position="13"/>
    </location>
</feature>
<feature type="active site" evidence="1">
    <location>
        <position position="132"/>
    </location>
</feature>
<organism>
    <name type="scientific">Leptospira interrogans serogroup Icterohaemorrhagiae serovar copenhageni (strain Fiocruz L1-130)</name>
    <dbReference type="NCBI Taxonomy" id="267671"/>
    <lineage>
        <taxon>Bacteria</taxon>
        <taxon>Pseudomonadati</taxon>
        <taxon>Spirochaetota</taxon>
        <taxon>Spirochaetia</taxon>
        <taxon>Leptospirales</taxon>
        <taxon>Leptospiraceae</taxon>
        <taxon>Leptospira</taxon>
    </lineage>
</organism>
<name>HIS6_LEPIC</name>
<reference key="1">
    <citation type="journal article" date="2004" name="J. Bacteriol.">
        <title>Comparative genomics of two Leptospira interrogans serovars reveals novel insights into physiology and pathogenesis.</title>
        <authorList>
            <person name="Nascimento A.L.T.O."/>
            <person name="Ko A.I."/>
            <person name="Martins E.A.L."/>
            <person name="Monteiro-Vitorello C.B."/>
            <person name="Ho P.L."/>
            <person name="Haake D.A."/>
            <person name="Verjovski-Almeida S."/>
            <person name="Hartskeerl R.A."/>
            <person name="Marques M.V."/>
            <person name="Oliveira M.C."/>
            <person name="Menck C.F.M."/>
            <person name="Leite L.C.C."/>
            <person name="Carrer H."/>
            <person name="Coutinho L.L."/>
            <person name="Degrave W.M."/>
            <person name="Dellagostin O.A."/>
            <person name="El-Dorry H."/>
            <person name="Ferro E.S."/>
            <person name="Ferro M.I.T."/>
            <person name="Furlan L.R."/>
            <person name="Gamberini M."/>
            <person name="Giglioti E.A."/>
            <person name="Goes-Neto A."/>
            <person name="Goldman G.H."/>
            <person name="Goldman M.H.S."/>
            <person name="Harakava R."/>
            <person name="Jeronimo S.M.B."/>
            <person name="Junqueira-de-Azevedo I.L.M."/>
            <person name="Kimura E.T."/>
            <person name="Kuramae E.E."/>
            <person name="Lemos E.G.M."/>
            <person name="Lemos M.V.F."/>
            <person name="Marino C.L."/>
            <person name="Nunes L.R."/>
            <person name="de Oliveira R.C."/>
            <person name="Pereira G.G."/>
            <person name="Reis M.S."/>
            <person name="Schriefer A."/>
            <person name="Siqueira W.J."/>
            <person name="Sommer P."/>
            <person name="Tsai S.M."/>
            <person name="Simpson A.J.G."/>
            <person name="Ferro J.A."/>
            <person name="Camargo L.E.A."/>
            <person name="Kitajima J.P."/>
            <person name="Setubal J.C."/>
            <person name="Van Sluys M.A."/>
        </authorList>
    </citation>
    <scope>NUCLEOTIDE SEQUENCE [LARGE SCALE GENOMIC DNA]</scope>
    <source>
        <strain>Fiocruz L1-130</strain>
    </source>
</reference>
<protein>
    <recommendedName>
        <fullName evidence="1">Imidazole glycerol phosphate synthase subunit HisF</fullName>
        <ecNumber evidence="1">4.3.2.10</ecNumber>
    </recommendedName>
    <alternativeName>
        <fullName evidence="1">IGP synthase cyclase subunit</fullName>
    </alternativeName>
    <alternativeName>
        <fullName evidence="1">IGP synthase subunit HisF</fullName>
    </alternativeName>
    <alternativeName>
        <fullName evidence="1">ImGP synthase subunit HisF</fullName>
        <shortName evidence="1">IGPS subunit HisF</shortName>
    </alternativeName>
</protein>
<accession>P62451</accession>
<keyword id="KW-0028">Amino-acid biosynthesis</keyword>
<keyword id="KW-0963">Cytoplasm</keyword>
<keyword id="KW-0368">Histidine biosynthesis</keyword>
<keyword id="KW-0456">Lyase</keyword>
<evidence type="ECO:0000255" key="1">
    <source>
        <dbReference type="HAMAP-Rule" id="MF_01013"/>
    </source>
</evidence>
<gene>
    <name evidence="1" type="primary">hisF</name>
    <name type="ordered locus">LIC_11462</name>
</gene>
<dbReference type="EC" id="4.3.2.10" evidence="1"/>
<dbReference type="EMBL" id="AE016823">
    <property type="protein sequence ID" value="AAS70060.1"/>
    <property type="molecule type" value="Genomic_DNA"/>
</dbReference>
<dbReference type="RefSeq" id="WP_000067921.1">
    <property type="nucleotide sequence ID" value="NC_005823.1"/>
</dbReference>
<dbReference type="SMR" id="P62451"/>
<dbReference type="GeneID" id="61144763"/>
<dbReference type="KEGG" id="lic:LIC_11462"/>
<dbReference type="HOGENOM" id="CLU_048577_4_0_12"/>
<dbReference type="UniPathway" id="UPA00031">
    <property type="reaction ID" value="UER00010"/>
</dbReference>
<dbReference type="Proteomes" id="UP000007037">
    <property type="component" value="Chromosome I"/>
</dbReference>
<dbReference type="GO" id="GO:0005737">
    <property type="term" value="C:cytoplasm"/>
    <property type="evidence" value="ECO:0007669"/>
    <property type="project" value="UniProtKB-SubCell"/>
</dbReference>
<dbReference type="GO" id="GO:0000107">
    <property type="term" value="F:imidazoleglycerol-phosphate synthase activity"/>
    <property type="evidence" value="ECO:0007669"/>
    <property type="project" value="UniProtKB-UniRule"/>
</dbReference>
<dbReference type="GO" id="GO:0016829">
    <property type="term" value="F:lyase activity"/>
    <property type="evidence" value="ECO:0007669"/>
    <property type="project" value="UniProtKB-KW"/>
</dbReference>
<dbReference type="GO" id="GO:0000105">
    <property type="term" value="P:L-histidine biosynthetic process"/>
    <property type="evidence" value="ECO:0007669"/>
    <property type="project" value="UniProtKB-UniRule"/>
</dbReference>
<dbReference type="CDD" id="cd04731">
    <property type="entry name" value="HisF"/>
    <property type="match status" value="1"/>
</dbReference>
<dbReference type="FunFam" id="3.20.20.70:FF:000006">
    <property type="entry name" value="Imidazole glycerol phosphate synthase subunit HisF"/>
    <property type="match status" value="1"/>
</dbReference>
<dbReference type="Gene3D" id="3.20.20.70">
    <property type="entry name" value="Aldolase class I"/>
    <property type="match status" value="1"/>
</dbReference>
<dbReference type="HAMAP" id="MF_01013">
    <property type="entry name" value="HisF"/>
    <property type="match status" value="1"/>
</dbReference>
<dbReference type="InterPro" id="IPR013785">
    <property type="entry name" value="Aldolase_TIM"/>
</dbReference>
<dbReference type="InterPro" id="IPR006062">
    <property type="entry name" value="His_biosynth"/>
</dbReference>
<dbReference type="InterPro" id="IPR004651">
    <property type="entry name" value="HisF"/>
</dbReference>
<dbReference type="InterPro" id="IPR050064">
    <property type="entry name" value="IGPS_HisA/HisF"/>
</dbReference>
<dbReference type="InterPro" id="IPR011060">
    <property type="entry name" value="RibuloseP-bd_barrel"/>
</dbReference>
<dbReference type="NCBIfam" id="TIGR00735">
    <property type="entry name" value="hisF"/>
    <property type="match status" value="1"/>
</dbReference>
<dbReference type="PANTHER" id="PTHR21235:SF2">
    <property type="entry name" value="IMIDAZOLE GLYCEROL PHOSPHATE SYNTHASE HISHF"/>
    <property type="match status" value="1"/>
</dbReference>
<dbReference type="PANTHER" id="PTHR21235">
    <property type="entry name" value="IMIDAZOLE GLYCEROL PHOSPHATE SYNTHASE SUBUNIT HISF/H IGP SYNTHASE SUBUNIT HISF/H"/>
    <property type="match status" value="1"/>
</dbReference>
<dbReference type="Pfam" id="PF00977">
    <property type="entry name" value="His_biosynth"/>
    <property type="match status" value="1"/>
</dbReference>
<dbReference type="SUPFAM" id="SSF51366">
    <property type="entry name" value="Ribulose-phoshate binding barrel"/>
    <property type="match status" value="1"/>
</dbReference>
<proteinExistence type="inferred from homology"/>
<comment type="function">
    <text evidence="1">IGPS catalyzes the conversion of PRFAR and glutamine to IGP, AICAR and glutamate. The HisF subunit catalyzes the cyclization activity that produces IGP and AICAR from PRFAR using the ammonia provided by the HisH subunit.</text>
</comment>
<comment type="catalytic activity">
    <reaction evidence="1">
        <text>5-[(5-phospho-1-deoxy-D-ribulos-1-ylimino)methylamino]-1-(5-phospho-beta-D-ribosyl)imidazole-4-carboxamide + L-glutamine = D-erythro-1-(imidazol-4-yl)glycerol 3-phosphate + 5-amino-1-(5-phospho-beta-D-ribosyl)imidazole-4-carboxamide + L-glutamate + H(+)</text>
        <dbReference type="Rhea" id="RHEA:24793"/>
        <dbReference type="ChEBI" id="CHEBI:15378"/>
        <dbReference type="ChEBI" id="CHEBI:29985"/>
        <dbReference type="ChEBI" id="CHEBI:58278"/>
        <dbReference type="ChEBI" id="CHEBI:58359"/>
        <dbReference type="ChEBI" id="CHEBI:58475"/>
        <dbReference type="ChEBI" id="CHEBI:58525"/>
        <dbReference type="EC" id="4.3.2.10"/>
    </reaction>
</comment>
<comment type="pathway">
    <text evidence="1">Amino-acid biosynthesis; L-histidine biosynthesis; L-histidine from 5-phospho-alpha-D-ribose 1-diphosphate: step 5/9.</text>
</comment>
<comment type="subunit">
    <text evidence="1">Heterodimer of HisH and HisF.</text>
</comment>
<comment type="subcellular location">
    <subcellularLocation>
        <location evidence="1">Cytoplasm</location>
    </subcellularLocation>
</comment>
<comment type="similarity">
    <text evidence="1">Belongs to the HisA/HisF family.</text>
</comment>